<reference key="1">
    <citation type="journal article" date="2010" name="Appl. Environ. Microbiol.">
        <title>The genome sequence of Psychrobacter arcticus 273-4, a psychroactive Siberian permafrost bacterium, reveals mechanisms for adaptation to low-temperature growth.</title>
        <authorList>
            <person name="Ayala-del-Rio H.L."/>
            <person name="Chain P.S."/>
            <person name="Grzymski J.J."/>
            <person name="Ponder M.A."/>
            <person name="Ivanova N."/>
            <person name="Bergholz P.W."/>
            <person name="Di Bartolo G."/>
            <person name="Hauser L."/>
            <person name="Land M."/>
            <person name="Bakermans C."/>
            <person name="Rodrigues D."/>
            <person name="Klappenbach J."/>
            <person name="Zarka D."/>
            <person name="Larimer F."/>
            <person name="Richardson P."/>
            <person name="Murray A."/>
            <person name="Thomashow M."/>
            <person name="Tiedje J.M."/>
        </authorList>
    </citation>
    <scope>NUCLEOTIDE SEQUENCE [LARGE SCALE GENOMIC DNA]</scope>
    <source>
        <strain>DSM 17307 / VKM B-2377 / 273-4</strain>
    </source>
</reference>
<protein>
    <recommendedName>
        <fullName evidence="1">Protein-export protein SecB</fullName>
    </recommendedName>
</protein>
<comment type="function">
    <text evidence="1">One of the proteins required for the normal export of preproteins out of the cell cytoplasm. It is a molecular chaperone that binds to a subset of precursor proteins, maintaining them in a translocation-competent state. It also specifically binds to its receptor SecA.</text>
</comment>
<comment type="subunit">
    <text evidence="1">Homotetramer, a dimer of dimers. One homotetramer interacts with 1 SecA dimer.</text>
</comment>
<comment type="subcellular location">
    <subcellularLocation>
        <location evidence="1">Cytoplasm</location>
    </subcellularLocation>
</comment>
<comment type="similarity">
    <text evidence="1">Belongs to the SecB family.</text>
</comment>
<accession>Q4FRF4</accession>
<organism>
    <name type="scientific">Psychrobacter arcticus (strain DSM 17307 / VKM B-2377 / 273-4)</name>
    <dbReference type="NCBI Taxonomy" id="259536"/>
    <lineage>
        <taxon>Bacteria</taxon>
        <taxon>Pseudomonadati</taxon>
        <taxon>Pseudomonadota</taxon>
        <taxon>Gammaproteobacteria</taxon>
        <taxon>Moraxellales</taxon>
        <taxon>Moraxellaceae</taxon>
        <taxon>Psychrobacter</taxon>
    </lineage>
</organism>
<proteinExistence type="inferred from homology"/>
<evidence type="ECO:0000255" key="1">
    <source>
        <dbReference type="HAMAP-Rule" id="MF_00821"/>
    </source>
</evidence>
<gene>
    <name evidence="1" type="primary">secB</name>
    <name type="ordered locus">Psyc_1556</name>
</gene>
<sequence length="148" mass="16307">MAEEQAQPQLALERIYVKDMSLEVPGAGVFTKEWNPELDINLSSNAEKLDDDHYQVVLTVSVTAKNAEEAAFIAEVHQAGIFLLKDIPEDQIGQILGAYCPNVLFPYAREVISDIVTRGSFPQLLLAPVNFDQAYAQSQQQVDAEGNA</sequence>
<dbReference type="EMBL" id="CP000082">
    <property type="protein sequence ID" value="AAZ19404.1"/>
    <property type="molecule type" value="Genomic_DNA"/>
</dbReference>
<dbReference type="SMR" id="Q4FRF4"/>
<dbReference type="STRING" id="259536.Psyc_1556"/>
<dbReference type="KEGG" id="par:Psyc_1556"/>
<dbReference type="eggNOG" id="COG1952">
    <property type="taxonomic scope" value="Bacteria"/>
</dbReference>
<dbReference type="HOGENOM" id="CLU_111574_1_0_6"/>
<dbReference type="OrthoDB" id="9795145at2"/>
<dbReference type="Proteomes" id="UP000000546">
    <property type="component" value="Chromosome"/>
</dbReference>
<dbReference type="GO" id="GO:0005737">
    <property type="term" value="C:cytoplasm"/>
    <property type="evidence" value="ECO:0007669"/>
    <property type="project" value="UniProtKB-SubCell"/>
</dbReference>
<dbReference type="GO" id="GO:0051082">
    <property type="term" value="F:unfolded protein binding"/>
    <property type="evidence" value="ECO:0007669"/>
    <property type="project" value="InterPro"/>
</dbReference>
<dbReference type="GO" id="GO:0006457">
    <property type="term" value="P:protein folding"/>
    <property type="evidence" value="ECO:0007669"/>
    <property type="project" value="UniProtKB-UniRule"/>
</dbReference>
<dbReference type="GO" id="GO:0051262">
    <property type="term" value="P:protein tetramerization"/>
    <property type="evidence" value="ECO:0007669"/>
    <property type="project" value="InterPro"/>
</dbReference>
<dbReference type="GO" id="GO:0015031">
    <property type="term" value="P:protein transport"/>
    <property type="evidence" value="ECO:0007669"/>
    <property type="project" value="UniProtKB-UniRule"/>
</dbReference>
<dbReference type="Gene3D" id="3.10.420.10">
    <property type="entry name" value="SecB-like"/>
    <property type="match status" value="1"/>
</dbReference>
<dbReference type="HAMAP" id="MF_00821">
    <property type="entry name" value="SecB"/>
    <property type="match status" value="1"/>
</dbReference>
<dbReference type="InterPro" id="IPR003708">
    <property type="entry name" value="SecB"/>
</dbReference>
<dbReference type="InterPro" id="IPR035958">
    <property type="entry name" value="SecB-like_sf"/>
</dbReference>
<dbReference type="NCBIfam" id="NF004393">
    <property type="entry name" value="PRK05751.1-4"/>
    <property type="match status" value="1"/>
</dbReference>
<dbReference type="NCBIfam" id="TIGR00809">
    <property type="entry name" value="secB"/>
    <property type="match status" value="1"/>
</dbReference>
<dbReference type="PANTHER" id="PTHR36918">
    <property type="match status" value="1"/>
</dbReference>
<dbReference type="PANTHER" id="PTHR36918:SF1">
    <property type="entry name" value="PROTEIN-EXPORT PROTEIN SECB"/>
    <property type="match status" value="1"/>
</dbReference>
<dbReference type="Pfam" id="PF02556">
    <property type="entry name" value="SecB"/>
    <property type="match status" value="1"/>
</dbReference>
<dbReference type="PRINTS" id="PR01594">
    <property type="entry name" value="SECBCHAPRONE"/>
</dbReference>
<dbReference type="SUPFAM" id="SSF54611">
    <property type="entry name" value="SecB-like"/>
    <property type="match status" value="1"/>
</dbReference>
<name>SECB_PSYA2</name>
<feature type="chain" id="PRO_0000055402" description="Protein-export protein SecB">
    <location>
        <begin position="1"/>
        <end position="148"/>
    </location>
</feature>
<keyword id="KW-0143">Chaperone</keyword>
<keyword id="KW-0963">Cytoplasm</keyword>
<keyword id="KW-0653">Protein transport</keyword>
<keyword id="KW-1185">Reference proteome</keyword>
<keyword id="KW-0811">Translocation</keyword>
<keyword id="KW-0813">Transport</keyword>